<gene>
    <name evidence="1" type="primary">der</name>
    <name type="synonym">engA</name>
    <name type="ordered locus">A9601_04421</name>
</gene>
<proteinExistence type="inferred from homology"/>
<dbReference type="EMBL" id="CP000551">
    <property type="protein sequence ID" value="ABM69730.1"/>
    <property type="molecule type" value="Genomic_DNA"/>
</dbReference>
<dbReference type="RefSeq" id="WP_011817902.1">
    <property type="nucleotide sequence ID" value="NC_008816.1"/>
</dbReference>
<dbReference type="SMR" id="A2BPL9"/>
<dbReference type="STRING" id="146891.A9601_04421"/>
<dbReference type="KEGG" id="pmb:A9601_04421"/>
<dbReference type="eggNOG" id="COG1160">
    <property type="taxonomic scope" value="Bacteria"/>
</dbReference>
<dbReference type="HOGENOM" id="CLU_016077_6_2_3"/>
<dbReference type="OrthoDB" id="9805918at2"/>
<dbReference type="Proteomes" id="UP000002590">
    <property type="component" value="Chromosome"/>
</dbReference>
<dbReference type="GO" id="GO:0005525">
    <property type="term" value="F:GTP binding"/>
    <property type="evidence" value="ECO:0007669"/>
    <property type="project" value="UniProtKB-UniRule"/>
</dbReference>
<dbReference type="GO" id="GO:0043022">
    <property type="term" value="F:ribosome binding"/>
    <property type="evidence" value="ECO:0007669"/>
    <property type="project" value="TreeGrafter"/>
</dbReference>
<dbReference type="GO" id="GO:0042254">
    <property type="term" value="P:ribosome biogenesis"/>
    <property type="evidence" value="ECO:0007669"/>
    <property type="project" value="UniProtKB-KW"/>
</dbReference>
<dbReference type="CDD" id="cd01894">
    <property type="entry name" value="EngA1"/>
    <property type="match status" value="1"/>
</dbReference>
<dbReference type="CDD" id="cd01895">
    <property type="entry name" value="EngA2"/>
    <property type="match status" value="1"/>
</dbReference>
<dbReference type="FunFam" id="3.30.300.20:FF:000004">
    <property type="entry name" value="GTPase Der"/>
    <property type="match status" value="1"/>
</dbReference>
<dbReference type="FunFam" id="3.40.50.300:FF:000040">
    <property type="entry name" value="GTPase Der"/>
    <property type="match status" value="1"/>
</dbReference>
<dbReference type="Gene3D" id="3.30.300.20">
    <property type="match status" value="1"/>
</dbReference>
<dbReference type="Gene3D" id="3.40.50.300">
    <property type="entry name" value="P-loop containing nucleotide triphosphate hydrolases"/>
    <property type="match status" value="2"/>
</dbReference>
<dbReference type="HAMAP" id="MF_00195">
    <property type="entry name" value="GTPase_Der"/>
    <property type="match status" value="1"/>
</dbReference>
<dbReference type="InterPro" id="IPR031166">
    <property type="entry name" value="G_ENGA"/>
</dbReference>
<dbReference type="InterPro" id="IPR006073">
    <property type="entry name" value="GTP-bd"/>
</dbReference>
<dbReference type="InterPro" id="IPR016484">
    <property type="entry name" value="GTPase_Der"/>
</dbReference>
<dbReference type="InterPro" id="IPR032859">
    <property type="entry name" value="KH_dom-like"/>
</dbReference>
<dbReference type="InterPro" id="IPR015946">
    <property type="entry name" value="KH_dom-like_a/b"/>
</dbReference>
<dbReference type="InterPro" id="IPR027417">
    <property type="entry name" value="P-loop_NTPase"/>
</dbReference>
<dbReference type="InterPro" id="IPR005225">
    <property type="entry name" value="Small_GTP-bd"/>
</dbReference>
<dbReference type="NCBIfam" id="TIGR03594">
    <property type="entry name" value="GTPase_EngA"/>
    <property type="match status" value="1"/>
</dbReference>
<dbReference type="NCBIfam" id="TIGR00231">
    <property type="entry name" value="small_GTP"/>
    <property type="match status" value="2"/>
</dbReference>
<dbReference type="PANTHER" id="PTHR43834">
    <property type="entry name" value="GTPASE DER"/>
    <property type="match status" value="1"/>
</dbReference>
<dbReference type="PANTHER" id="PTHR43834:SF6">
    <property type="entry name" value="GTPASE DER"/>
    <property type="match status" value="1"/>
</dbReference>
<dbReference type="Pfam" id="PF14714">
    <property type="entry name" value="KH_dom-like"/>
    <property type="match status" value="1"/>
</dbReference>
<dbReference type="Pfam" id="PF01926">
    <property type="entry name" value="MMR_HSR1"/>
    <property type="match status" value="2"/>
</dbReference>
<dbReference type="PIRSF" id="PIRSF006485">
    <property type="entry name" value="GTP-binding_EngA"/>
    <property type="match status" value="1"/>
</dbReference>
<dbReference type="PRINTS" id="PR00326">
    <property type="entry name" value="GTP1OBG"/>
</dbReference>
<dbReference type="SUPFAM" id="SSF52540">
    <property type="entry name" value="P-loop containing nucleoside triphosphate hydrolases"/>
    <property type="match status" value="2"/>
</dbReference>
<dbReference type="PROSITE" id="PS51712">
    <property type="entry name" value="G_ENGA"/>
    <property type="match status" value="2"/>
</dbReference>
<sequence length="457" mass="51103">MILPTIAIIGRPNVGKSTLVNRLCQSNDAIVFDKPGVTRDRTYQNASWGGKEFQIVDTGGLVFDDESEFLPEIRTQVFLALEEASLALLVVDGNQGVTDGDLSIAKWLRNSSCKTIVAVNKCESTTLGISLASEFWKLGLGEPNPVSAIHGSGTGDLLDLVIGELPENNIQDDEEKIMMSIIGRPNVGKSSLLNSICGEKRAIVSDISGTTTDSIDTLIKKGDNNWKIIDTAGIRRKKNVKYGTEFFGINRAFKSIDRSDVCVLVIDAVDGVTDQDQKLAGRIEEQGRACIIVVNKWDLIEKNSSTIYQVEKELRSKLYFLHWSKMIFISALTGQRVDNIFEHALNAVNQHRRRVTTSVVNEVLKESISWKSPPTKRSGKQGRLYYGTQVKNKPPTFTLFVNDPKLFGITYRRYIEKQIRVNLGFEGTPLILLWRGKQQRALNKEVERENIELIQKD</sequence>
<organism>
    <name type="scientific">Prochlorococcus marinus (strain AS9601)</name>
    <dbReference type="NCBI Taxonomy" id="146891"/>
    <lineage>
        <taxon>Bacteria</taxon>
        <taxon>Bacillati</taxon>
        <taxon>Cyanobacteriota</taxon>
        <taxon>Cyanophyceae</taxon>
        <taxon>Synechococcales</taxon>
        <taxon>Prochlorococcaceae</taxon>
        <taxon>Prochlorococcus</taxon>
    </lineage>
</organism>
<keyword id="KW-0342">GTP-binding</keyword>
<keyword id="KW-0547">Nucleotide-binding</keyword>
<keyword id="KW-0677">Repeat</keyword>
<keyword id="KW-0690">Ribosome biogenesis</keyword>
<comment type="function">
    <text evidence="1">GTPase that plays an essential role in the late steps of ribosome biogenesis.</text>
</comment>
<comment type="subunit">
    <text evidence="1">Associates with the 50S ribosomal subunit.</text>
</comment>
<comment type="similarity">
    <text evidence="1">Belongs to the TRAFAC class TrmE-Era-EngA-EngB-Septin-like GTPase superfamily. EngA (Der) GTPase family.</text>
</comment>
<evidence type="ECO:0000255" key="1">
    <source>
        <dbReference type="HAMAP-Rule" id="MF_00195"/>
    </source>
</evidence>
<protein>
    <recommendedName>
        <fullName evidence="1">GTPase Der</fullName>
    </recommendedName>
    <alternativeName>
        <fullName evidence="1">GTP-binding protein EngA</fullName>
    </alternativeName>
</protein>
<feature type="chain" id="PRO_1000011694" description="GTPase Der">
    <location>
        <begin position="1"/>
        <end position="457"/>
    </location>
</feature>
<feature type="domain" description="EngA-type G 1">
    <location>
        <begin position="4"/>
        <end position="169"/>
    </location>
</feature>
<feature type="domain" description="EngA-type G 2">
    <location>
        <begin position="177"/>
        <end position="352"/>
    </location>
</feature>
<feature type="domain" description="KH-like" evidence="1">
    <location>
        <begin position="353"/>
        <end position="438"/>
    </location>
</feature>
<feature type="binding site" evidence="1">
    <location>
        <begin position="10"/>
        <end position="17"/>
    </location>
    <ligand>
        <name>GTP</name>
        <dbReference type="ChEBI" id="CHEBI:37565"/>
        <label>1</label>
    </ligand>
</feature>
<feature type="binding site" evidence="1">
    <location>
        <begin position="57"/>
        <end position="61"/>
    </location>
    <ligand>
        <name>GTP</name>
        <dbReference type="ChEBI" id="CHEBI:37565"/>
        <label>1</label>
    </ligand>
</feature>
<feature type="binding site" evidence="1">
    <location>
        <begin position="120"/>
        <end position="123"/>
    </location>
    <ligand>
        <name>GTP</name>
        <dbReference type="ChEBI" id="CHEBI:37565"/>
        <label>1</label>
    </ligand>
</feature>
<feature type="binding site" evidence="1">
    <location>
        <begin position="183"/>
        <end position="190"/>
    </location>
    <ligand>
        <name>GTP</name>
        <dbReference type="ChEBI" id="CHEBI:37565"/>
        <label>2</label>
    </ligand>
</feature>
<feature type="binding site" evidence="1">
    <location>
        <begin position="230"/>
        <end position="234"/>
    </location>
    <ligand>
        <name>GTP</name>
        <dbReference type="ChEBI" id="CHEBI:37565"/>
        <label>2</label>
    </ligand>
</feature>
<feature type="binding site" evidence="1">
    <location>
        <begin position="295"/>
        <end position="298"/>
    </location>
    <ligand>
        <name>GTP</name>
        <dbReference type="ChEBI" id="CHEBI:37565"/>
        <label>2</label>
    </ligand>
</feature>
<name>DER_PROMS</name>
<accession>A2BPL9</accession>
<reference key="1">
    <citation type="journal article" date="2007" name="PLoS Genet.">
        <title>Patterns and implications of gene gain and loss in the evolution of Prochlorococcus.</title>
        <authorList>
            <person name="Kettler G.C."/>
            <person name="Martiny A.C."/>
            <person name="Huang K."/>
            <person name="Zucker J."/>
            <person name="Coleman M.L."/>
            <person name="Rodrigue S."/>
            <person name="Chen F."/>
            <person name="Lapidus A."/>
            <person name="Ferriera S."/>
            <person name="Johnson J."/>
            <person name="Steglich C."/>
            <person name="Church G.M."/>
            <person name="Richardson P."/>
            <person name="Chisholm S.W."/>
        </authorList>
    </citation>
    <scope>NUCLEOTIDE SEQUENCE [LARGE SCALE GENOMIC DNA]</scope>
    <source>
        <strain>AS9601</strain>
    </source>
</reference>